<organism>
    <name type="scientific">Acidithiobacillus ferrooxidans (strain ATCC 23270 / DSM 14882 / CIP 104768 / NCIMB 8455)</name>
    <name type="common">Ferrobacillus ferrooxidans (strain ATCC 23270)</name>
    <dbReference type="NCBI Taxonomy" id="243159"/>
    <lineage>
        <taxon>Bacteria</taxon>
        <taxon>Pseudomonadati</taxon>
        <taxon>Pseudomonadota</taxon>
        <taxon>Acidithiobacillia</taxon>
        <taxon>Acidithiobacillales</taxon>
        <taxon>Acidithiobacillaceae</taxon>
        <taxon>Acidithiobacillus</taxon>
    </lineage>
</organism>
<keyword id="KW-0627">Porphyrin biosynthesis</keyword>
<keyword id="KW-1185">Reference proteome</keyword>
<keyword id="KW-0808">Transferase</keyword>
<accession>B7JBH8</accession>
<proteinExistence type="inferred from homology"/>
<feature type="chain" id="PRO_1000119205" description="Porphobilinogen deaminase">
    <location>
        <begin position="1"/>
        <end position="306"/>
    </location>
</feature>
<feature type="modified residue" description="S-(dipyrrolylmethanemethyl)cysteine" evidence="1">
    <location>
        <position position="241"/>
    </location>
</feature>
<evidence type="ECO:0000255" key="1">
    <source>
        <dbReference type="HAMAP-Rule" id="MF_00260"/>
    </source>
</evidence>
<name>HEM3_ACIF2</name>
<gene>
    <name evidence="1" type="primary">hemC</name>
    <name type="ordered locus">AFE_3300</name>
</gene>
<sequence length="306" mass="33039">MPHSLRIGTRASPLAVWQAEHVRAALLRLHPGMAVEIITMTTSGDVLLDAPLHALGGKGLFVKEIEDALQQRRVDVAVHSMKDVPALQPDGLEIVAIMAREDVRDAFVSNTFLHPDALPEGARVGSSSLRRRAQLLERYPHLRVEDLRGNVATRLRRLDEGHYDAIILAAAGLKRLGLPDRITHLLDIDRSLPAVGQGAIGIEARSDDRRTRELLAPLADADTQNCVLAERSMNQVLGGDCRLPVAALARWQGPQMLLRGLVATPDGRRVLHAEAKGSDPVALGMAVAAALVAQGAAEIIEDVRNA</sequence>
<comment type="function">
    <text evidence="1">Tetrapolymerization of the monopyrrole PBG into the hydroxymethylbilane pre-uroporphyrinogen in several discrete steps.</text>
</comment>
<comment type="catalytic activity">
    <reaction evidence="1">
        <text>4 porphobilinogen + H2O = hydroxymethylbilane + 4 NH4(+)</text>
        <dbReference type="Rhea" id="RHEA:13185"/>
        <dbReference type="ChEBI" id="CHEBI:15377"/>
        <dbReference type="ChEBI" id="CHEBI:28938"/>
        <dbReference type="ChEBI" id="CHEBI:57845"/>
        <dbReference type="ChEBI" id="CHEBI:58126"/>
        <dbReference type="EC" id="2.5.1.61"/>
    </reaction>
</comment>
<comment type="cofactor">
    <cofactor evidence="1">
        <name>dipyrromethane</name>
        <dbReference type="ChEBI" id="CHEBI:60342"/>
    </cofactor>
    <text evidence="1">Binds 1 dipyrromethane group covalently.</text>
</comment>
<comment type="pathway">
    <text evidence="1">Porphyrin-containing compound metabolism; protoporphyrin-IX biosynthesis; coproporphyrinogen-III from 5-aminolevulinate: step 2/4.</text>
</comment>
<comment type="subunit">
    <text evidence="1">Monomer.</text>
</comment>
<comment type="miscellaneous">
    <text evidence="1">The porphobilinogen subunits are added to the dipyrromethane group.</text>
</comment>
<comment type="similarity">
    <text evidence="1">Belongs to the HMBS family.</text>
</comment>
<reference key="1">
    <citation type="journal article" date="2008" name="BMC Genomics">
        <title>Acidithiobacillus ferrooxidans metabolism: from genome sequence to industrial applications.</title>
        <authorList>
            <person name="Valdes J."/>
            <person name="Pedroso I."/>
            <person name="Quatrini R."/>
            <person name="Dodson R.J."/>
            <person name="Tettelin H."/>
            <person name="Blake R. II"/>
            <person name="Eisen J.A."/>
            <person name="Holmes D.S."/>
        </authorList>
    </citation>
    <scope>NUCLEOTIDE SEQUENCE [LARGE SCALE GENOMIC DNA]</scope>
    <source>
        <strain>ATCC 23270 / DSM 14882 / CIP 104768 / NCIMB 8455</strain>
    </source>
</reference>
<protein>
    <recommendedName>
        <fullName evidence="1">Porphobilinogen deaminase</fullName>
        <shortName evidence="1">PBG</shortName>
        <ecNumber evidence="1">2.5.1.61</ecNumber>
    </recommendedName>
    <alternativeName>
        <fullName evidence="1">Hydroxymethylbilane synthase</fullName>
        <shortName evidence="1">HMBS</shortName>
    </alternativeName>
    <alternativeName>
        <fullName evidence="1">Pre-uroporphyrinogen synthase</fullName>
    </alternativeName>
</protein>
<dbReference type="EC" id="2.5.1.61" evidence="1"/>
<dbReference type="EMBL" id="CP001219">
    <property type="protein sequence ID" value="ACK79187.1"/>
    <property type="molecule type" value="Genomic_DNA"/>
</dbReference>
<dbReference type="RefSeq" id="WP_012537704.1">
    <property type="nucleotide sequence ID" value="NC_011761.1"/>
</dbReference>
<dbReference type="SMR" id="B7JBH8"/>
<dbReference type="STRING" id="243159.AFE_3300"/>
<dbReference type="PaxDb" id="243159-AFE_3300"/>
<dbReference type="GeneID" id="65282277"/>
<dbReference type="KEGG" id="afr:AFE_3300"/>
<dbReference type="eggNOG" id="COG0181">
    <property type="taxonomic scope" value="Bacteria"/>
</dbReference>
<dbReference type="HOGENOM" id="CLU_019704_0_2_6"/>
<dbReference type="UniPathway" id="UPA00251">
    <property type="reaction ID" value="UER00319"/>
</dbReference>
<dbReference type="Proteomes" id="UP000001362">
    <property type="component" value="Chromosome"/>
</dbReference>
<dbReference type="GO" id="GO:0005737">
    <property type="term" value="C:cytoplasm"/>
    <property type="evidence" value="ECO:0007669"/>
    <property type="project" value="TreeGrafter"/>
</dbReference>
<dbReference type="GO" id="GO:0004418">
    <property type="term" value="F:hydroxymethylbilane synthase activity"/>
    <property type="evidence" value="ECO:0007669"/>
    <property type="project" value="UniProtKB-UniRule"/>
</dbReference>
<dbReference type="GO" id="GO:0006782">
    <property type="term" value="P:protoporphyrinogen IX biosynthetic process"/>
    <property type="evidence" value="ECO:0007669"/>
    <property type="project" value="UniProtKB-UniRule"/>
</dbReference>
<dbReference type="CDD" id="cd13646">
    <property type="entry name" value="PBP2_EcHMBS_like"/>
    <property type="match status" value="1"/>
</dbReference>
<dbReference type="FunFam" id="3.40.190.10:FF:000004">
    <property type="entry name" value="Porphobilinogen deaminase"/>
    <property type="match status" value="1"/>
</dbReference>
<dbReference type="FunFam" id="3.40.190.10:FF:000005">
    <property type="entry name" value="Porphobilinogen deaminase"/>
    <property type="match status" value="1"/>
</dbReference>
<dbReference type="Gene3D" id="3.40.190.10">
    <property type="entry name" value="Periplasmic binding protein-like II"/>
    <property type="match status" value="2"/>
</dbReference>
<dbReference type="Gene3D" id="3.30.160.40">
    <property type="entry name" value="Porphobilinogen deaminase, C-terminal domain"/>
    <property type="match status" value="1"/>
</dbReference>
<dbReference type="HAMAP" id="MF_00260">
    <property type="entry name" value="Porphobil_deam"/>
    <property type="match status" value="1"/>
</dbReference>
<dbReference type="InterPro" id="IPR000860">
    <property type="entry name" value="HemC"/>
</dbReference>
<dbReference type="InterPro" id="IPR022417">
    <property type="entry name" value="Porphobilin_deaminase_N"/>
</dbReference>
<dbReference type="InterPro" id="IPR022418">
    <property type="entry name" value="Porphobilinogen_deaminase_C"/>
</dbReference>
<dbReference type="InterPro" id="IPR036803">
    <property type="entry name" value="Porphobilinogen_deaminase_C_sf"/>
</dbReference>
<dbReference type="NCBIfam" id="TIGR00212">
    <property type="entry name" value="hemC"/>
    <property type="match status" value="1"/>
</dbReference>
<dbReference type="PANTHER" id="PTHR11557">
    <property type="entry name" value="PORPHOBILINOGEN DEAMINASE"/>
    <property type="match status" value="1"/>
</dbReference>
<dbReference type="PANTHER" id="PTHR11557:SF0">
    <property type="entry name" value="PORPHOBILINOGEN DEAMINASE"/>
    <property type="match status" value="1"/>
</dbReference>
<dbReference type="Pfam" id="PF01379">
    <property type="entry name" value="Porphobil_deam"/>
    <property type="match status" value="1"/>
</dbReference>
<dbReference type="Pfam" id="PF03900">
    <property type="entry name" value="Porphobil_deamC"/>
    <property type="match status" value="1"/>
</dbReference>
<dbReference type="PIRSF" id="PIRSF001438">
    <property type="entry name" value="4pyrrol_synth_OHMeBilane_synth"/>
    <property type="match status" value="1"/>
</dbReference>
<dbReference type="PRINTS" id="PR00151">
    <property type="entry name" value="PORPHBDMNASE"/>
</dbReference>
<dbReference type="SUPFAM" id="SSF53850">
    <property type="entry name" value="Periplasmic binding protein-like II"/>
    <property type="match status" value="1"/>
</dbReference>
<dbReference type="SUPFAM" id="SSF54782">
    <property type="entry name" value="Porphobilinogen deaminase (hydroxymethylbilane synthase), C-terminal domain"/>
    <property type="match status" value="1"/>
</dbReference>